<proteinExistence type="inferred from homology"/>
<accession>Q98CM3</accession>
<protein>
    <recommendedName>
        <fullName evidence="1">Adenosylhomocysteinase</fullName>
        <ecNumber evidence="1">3.13.2.1</ecNumber>
    </recommendedName>
    <alternativeName>
        <fullName evidence="1">S-adenosyl-L-homocysteine hydrolase</fullName>
        <shortName evidence="1">AdoHcyase</shortName>
    </alternativeName>
</protein>
<organism>
    <name type="scientific">Mesorhizobium japonicum (strain LMG 29417 / CECT 9101 / MAFF 303099)</name>
    <name type="common">Mesorhizobium loti (strain MAFF 303099)</name>
    <dbReference type="NCBI Taxonomy" id="266835"/>
    <lineage>
        <taxon>Bacteria</taxon>
        <taxon>Pseudomonadati</taxon>
        <taxon>Pseudomonadota</taxon>
        <taxon>Alphaproteobacteria</taxon>
        <taxon>Hyphomicrobiales</taxon>
        <taxon>Phyllobacteriaceae</taxon>
        <taxon>Mesorhizobium</taxon>
    </lineage>
</organism>
<sequence length="466" mass="50819">MTGSKDYVVADISLAGWGRKELDIAETEMPGLMACREEFGAKKPLKGARITGSLHMTIQTAVLIETLKALGADIRWASCNIFSTQDHAAAAIAEAGIPVFAVKGESLEQYWDYTDRIFQWADGGLSNMILDDGGDATMYILIGARAEAGEDVLSNPQSEEEEYFYAQVKKRLKASPGFFTKQKAAIRGVTEETTTGVNRLYQLQKKGLLPFPAINVNDSVTKSKFDNKYGCKESLVDGIRRGTDTMMAGKVAVVCGYGDVGKGSSASLKGAGARVKVTEVDPICALQAAMDGFEVVTLEDAAPTADIVITTTGNKDVVTLDHMRSMKDMVIVGNIGHFDNEIQVASLRNLKWTNVKPQVDMITFPDGKRMILLSEGRLLNLGNATGHPSFVMSASFTNQVLAQIELFTKGEQYQNQVYVLPKHLDEKVARLHLDKLGARLTELSGEQAAYIGVTPQGPFKPEHYRY</sequence>
<comment type="function">
    <text evidence="1">May play a key role in the regulation of the intracellular concentration of adenosylhomocysteine.</text>
</comment>
<comment type="catalytic activity">
    <reaction evidence="1">
        <text>S-adenosyl-L-homocysteine + H2O = L-homocysteine + adenosine</text>
        <dbReference type="Rhea" id="RHEA:21708"/>
        <dbReference type="ChEBI" id="CHEBI:15377"/>
        <dbReference type="ChEBI" id="CHEBI:16335"/>
        <dbReference type="ChEBI" id="CHEBI:57856"/>
        <dbReference type="ChEBI" id="CHEBI:58199"/>
        <dbReference type="EC" id="3.13.2.1"/>
    </reaction>
</comment>
<comment type="cofactor">
    <cofactor evidence="1">
        <name>NAD(+)</name>
        <dbReference type="ChEBI" id="CHEBI:57540"/>
    </cofactor>
    <text evidence="1">Binds 1 NAD(+) per subunit.</text>
</comment>
<comment type="pathway">
    <text evidence="1">Amino-acid biosynthesis; L-homocysteine biosynthesis; L-homocysteine from S-adenosyl-L-homocysteine: step 1/1.</text>
</comment>
<comment type="subcellular location">
    <subcellularLocation>
        <location evidence="1">Cytoplasm</location>
    </subcellularLocation>
</comment>
<comment type="similarity">
    <text evidence="1">Belongs to the adenosylhomocysteinase family.</text>
</comment>
<gene>
    <name evidence="1" type="primary">ahcY</name>
    <name type="ordered locus">mll5088</name>
</gene>
<feature type="chain" id="PRO_0000116980" description="Adenosylhomocysteinase">
    <location>
        <begin position="1"/>
        <end position="466"/>
    </location>
</feature>
<feature type="binding site" evidence="1">
    <location>
        <position position="57"/>
    </location>
    <ligand>
        <name>substrate</name>
    </ligand>
</feature>
<feature type="binding site" evidence="1">
    <location>
        <position position="132"/>
    </location>
    <ligand>
        <name>substrate</name>
    </ligand>
</feature>
<feature type="binding site" evidence="1">
    <location>
        <position position="192"/>
    </location>
    <ligand>
        <name>substrate</name>
    </ligand>
</feature>
<feature type="binding site" evidence="1">
    <location>
        <begin position="193"/>
        <end position="195"/>
    </location>
    <ligand>
        <name>NAD(+)</name>
        <dbReference type="ChEBI" id="CHEBI:57540"/>
    </ligand>
</feature>
<feature type="binding site" evidence="1">
    <location>
        <position position="222"/>
    </location>
    <ligand>
        <name>substrate</name>
    </ligand>
</feature>
<feature type="binding site" evidence="1">
    <location>
        <position position="226"/>
    </location>
    <ligand>
        <name>substrate</name>
    </ligand>
</feature>
<feature type="binding site" evidence="1">
    <location>
        <position position="227"/>
    </location>
    <ligand>
        <name>NAD(+)</name>
        <dbReference type="ChEBI" id="CHEBI:57540"/>
    </ligand>
</feature>
<feature type="binding site" evidence="1">
    <location>
        <begin position="256"/>
        <end position="261"/>
    </location>
    <ligand>
        <name>NAD(+)</name>
        <dbReference type="ChEBI" id="CHEBI:57540"/>
    </ligand>
</feature>
<feature type="binding site" evidence="1">
    <location>
        <position position="279"/>
    </location>
    <ligand>
        <name>NAD(+)</name>
        <dbReference type="ChEBI" id="CHEBI:57540"/>
    </ligand>
</feature>
<feature type="binding site" evidence="1">
    <location>
        <position position="314"/>
    </location>
    <ligand>
        <name>NAD(+)</name>
        <dbReference type="ChEBI" id="CHEBI:57540"/>
    </ligand>
</feature>
<feature type="binding site" evidence="1">
    <location>
        <begin position="335"/>
        <end position="337"/>
    </location>
    <ligand>
        <name>NAD(+)</name>
        <dbReference type="ChEBI" id="CHEBI:57540"/>
    </ligand>
</feature>
<feature type="binding site" evidence="1">
    <location>
        <position position="380"/>
    </location>
    <ligand>
        <name>NAD(+)</name>
        <dbReference type="ChEBI" id="CHEBI:57540"/>
    </ligand>
</feature>
<keyword id="KW-0963">Cytoplasm</keyword>
<keyword id="KW-0378">Hydrolase</keyword>
<keyword id="KW-0520">NAD</keyword>
<keyword id="KW-0554">One-carbon metabolism</keyword>
<evidence type="ECO:0000255" key="1">
    <source>
        <dbReference type="HAMAP-Rule" id="MF_00563"/>
    </source>
</evidence>
<reference key="1">
    <citation type="journal article" date="2000" name="DNA Res.">
        <title>Complete genome structure of the nitrogen-fixing symbiotic bacterium Mesorhizobium loti.</title>
        <authorList>
            <person name="Kaneko T."/>
            <person name="Nakamura Y."/>
            <person name="Sato S."/>
            <person name="Asamizu E."/>
            <person name="Kato T."/>
            <person name="Sasamoto S."/>
            <person name="Watanabe A."/>
            <person name="Idesawa K."/>
            <person name="Ishikawa A."/>
            <person name="Kawashima K."/>
            <person name="Kimura T."/>
            <person name="Kishida Y."/>
            <person name="Kiyokawa C."/>
            <person name="Kohara M."/>
            <person name="Matsumoto M."/>
            <person name="Matsuno A."/>
            <person name="Mochizuki Y."/>
            <person name="Nakayama S."/>
            <person name="Nakazaki N."/>
            <person name="Shimpo S."/>
            <person name="Sugimoto M."/>
            <person name="Takeuchi C."/>
            <person name="Yamada M."/>
            <person name="Tabata S."/>
        </authorList>
    </citation>
    <scope>NUCLEOTIDE SEQUENCE [LARGE SCALE GENOMIC DNA]</scope>
    <source>
        <strain>LMG 29417 / CECT 9101 / MAFF 303099</strain>
    </source>
</reference>
<name>SAHH_RHILO</name>
<dbReference type="EC" id="3.13.2.1" evidence="1"/>
<dbReference type="EMBL" id="BA000012">
    <property type="protein sequence ID" value="BAB51598.1"/>
    <property type="molecule type" value="Genomic_DNA"/>
</dbReference>
<dbReference type="RefSeq" id="WP_010912937.1">
    <property type="nucleotide sequence ID" value="NC_002678.2"/>
</dbReference>
<dbReference type="SMR" id="Q98CM3"/>
<dbReference type="KEGG" id="mlo:mll5088"/>
<dbReference type="eggNOG" id="COG0499">
    <property type="taxonomic scope" value="Bacteria"/>
</dbReference>
<dbReference type="HOGENOM" id="CLU_025194_2_1_5"/>
<dbReference type="UniPathway" id="UPA00314">
    <property type="reaction ID" value="UER00076"/>
</dbReference>
<dbReference type="Proteomes" id="UP000000552">
    <property type="component" value="Chromosome"/>
</dbReference>
<dbReference type="GO" id="GO:0005829">
    <property type="term" value="C:cytosol"/>
    <property type="evidence" value="ECO:0007669"/>
    <property type="project" value="TreeGrafter"/>
</dbReference>
<dbReference type="GO" id="GO:0004013">
    <property type="term" value="F:adenosylhomocysteinase activity"/>
    <property type="evidence" value="ECO:0007669"/>
    <property type="project" value="UniProtKB-UniRule"/>
</dbReference>
<dbReference type="GO" id="GO:0071269">
    <property type="term" value="P:L-homocysteine biosynthetic process"/>
    <property type="evidence" value="ECO:0007669"/>
    <property type="project" value="UniProtKB-UniRule"/>
</dbReference>
<dbReference type="GO" id="GO:0006730">
    <property type="term" value="P:one-carbon metabolic process"/>
    <property type="evidence" value="ECO:0007669"/>
    <property type="project" value="UniProtKB-KW"/>
</dbReference>
<dbReference type="GO" id="GO:0033353">
    <property type="term" value="P:S-adenosylmethionine cycle"/>
    <property type="evidence" value="ECO:0007669"/>
    <property type="project" value="TreeGrafter"/>
</dbReference>
<dbReference type="CDD" id="cd00401">
    <property type="entry name" value="SAHH"/>
    <property type="match status" value="1"/>
</dbReference>
<dbReference type="FunFam" id="3.40.50.720:FF:000004">
    <property type="entry name" value="Adenosylhomocysteinase"/>
    <property type="match status" value="1"/>
</dbReference>
<dbReference type="Gene3D" id="3.40.50.1480">
    <property type="entry name" value="Adenosylhomocysteinase-like"/>
    <property type="match status" value="1"/>
</dbReference>
<dbReference type="Gene3D" id="3.40.50.720">
    <property type="entry name" value="NAD(P)-binding Rossmann-like Domain"/>
    <property type="match status" value="1"/>
</dbReference>
<dbReference type="HAMAP" id="MF_00563">
    <property type="entry name" value="AdoHcyase"/>
    <property type="match status" value="1"/>
</dbReference>
<dbReference type="InterPro" id="IPR042172">
    <property type="entry name" value="Adenosylhomocyst_ase-like_sf"/>
</dbReference>
<dbReference type="InterPro" id="IPR000043">
    <property type="entry name" value="Adenosylhomocysteinase-like"/>
</dbReference>
<dbReference type="InterPro" id="IPR015878">
    <property type="entry name" value="Ado_hCys_hydrolase_NAD-bd"/>
</dbReference>
<dbReference type="InterPro" id="IPR036291">
    <property type="entry name" value="NAD(P)-bd_dom_sf"/>
</dbReference>
<dbReference type="InterPro" id="IPR020082">
    <property type="entry name" value="S-Ado-L-homoCys_hydrolase_CS"/>
</dbReference>
<dbReference type="NCBIfam" id="TIGR00936">
    <property type="entry name" value="ahcY"/>
    <property type="match status" value="1"/>
</dbReference>
<dbReference type="NCBIfam" id="NF004005">
    <property type="entry name" value="PRK05476.2-3"/>
    <property type="match status" value="1"/>
</dbReference>
<dbReference type="PANTHER" id="PTHR23420">
    <property type="entry name" value="ADENOSYLHOMOCYSTEINASE"/>
    <property type="match status" value="1"/>
</dbReference>
<dbReference type="PANTHER" id="PTHR23420:SF0">
    <property type="entry name" value="ADENOSYLHOMOCYSTEINASE"/>
    <property type="match status" value="1"/>
</dbReference>
<dbReference type="Pfam" id="PF05221">
    <property type="entry name" value="AdoHcyase"/>
    <property type="match status" value="1"/>
</dbReference>
<dbReference type="Pfam" id="PF00670">
    <property type="entry name" value="AdoHcyase_NAD"/>
    <property type="match status" value="1"/>
</dbReference>
<dbReference type="PIRSF" id="PIRSF001109">
    <property type="entry name" value="Ad_hcy_hydrolase"/>
    <property type="match status" value="1"/>
</dbReference>
<dbReference type="SMART" id="SM00996">
    <property type="entry name" value="AdoHcyase"/>
    <property type="match status" value="1"/>
</dbReference>
<dbReference type="SMART" id="SM00997">
    <property type="entry name" value="AdoHcyase_NAD"/>
    <property type="match status" value="1"/>
</dbReference>
<dbReference type="SUPFAM" id="SSF52283">
    <property type="entry name" value="Formate/glycerate dehydrogenase catalytic domain-like"/>
    <property type="match status" value="1"/>
</dbReference>
<dbReference type="SUPFAM" id="SSF51735">
    <property type="entry name" value="NAD(P)-binding Rossmann-fold domains"/>
    <property type="match status" value="1"/>
</dbReference>
<dbReference type="PROSITE" id="PS00738">
    <property type="entry name" value="ADOHCYASE_1"/>
    <property type="match status" value="1"/>
</dbReference>
<dbReference type="PROSITE" id="PS00739">
    <property type="entry name" value="ADOHCYASE_2"/>
    <property type="match status" value="1"/>
</dbReference>